<name>DNLJ_BARBK</name>
<gene>
    <name evidence="1" type="primary">ligA</name>
    <name type="ordered locus">BARBAKC583_0937</name>
</gene>
<feature type="chain" id="PRO_0000313134" description="DNA ligase">
    <location>
        <begin position="1"/>
        <end position="717"/>
    </location>
</feature>
<feature type="domain" description="BRCT" evidence="1">
    <location>
        <begin position="636"/>
        <end position="717"/>
    </location>
</feature>
<feature type="active site" description="N6-AMP-lysine intermediate" evidence="1">
    <location>
        <position position="126"/>
    </location>
</feature>
<feature type="binding site" evidence="1">
    <location>
        <begin position="41"/>
        <end position="45"/>
    </location>
    <ligand>
        <name>NAD(+)</name>
        <dbReference type="ChEBI" id="CHEBI:57540"/>
    </ligand>
</feature>
<feature type="binding site" evidence="1">
    <location>
        <begin position="90"/>
        <end position="91"/>
    </location>
    <ligand>
        <name>NAD(+)</name>
        <dbReference type="ChEBI" id="CHEBI:57540"/>
    </ligand>
</feature>
<feature type="binding site" evidence="1">
    <location>
        <position position="124"/>
    </location>
    <ligand>
        <name>NAD(+)</name>
        <dbReference type="ChEBI" id="CHEBI:57540"/>
    </ligand>
</feature>
<feature type="binding site" evidence="1">
    <location>
        <position position="147"/>
    </location>
    <ligand>
        <name>NAD(+)</name>
        <dbReference type="ChEBI" id="CHEBI:57540"/>
    </ligand>
</feature>
<feature type="binding site" evidence="1">
    <location>
        <position position="183"/>
    </location>
    <ligand>
        <name>NAD(+)</name>
        <dbReference type="ChEBI" id="CHEBI:57540"/>
    </ligand>
</feature>
<feature type="binding site" evidence="1">
    <location>
        <position position="299"/>
    </location>
    <ligand>
        <name>NAD(+)</name>
        <dbReference type="ChEBI" id="CHEBI:57540"/>
    </ligand>
</feature>
<feature type="binding site" evidence="1">
    <location>
        <position position="323"/>
    </location>
    <ligand>
        <name>NAD(+)</name>
        <dbReference type="ChEBI" id="CHEBI:57540"/>
    </ligand>
</feature>
<feature type="binding site" evidence="1">
    <location>
        <position position="428"/>
    </location>
    <ligand>
        <name>Zn(2+)</name>
        <dbReference type="ChEBI" id="CHEBI:29105"/>
    </ligand>
</feature>
<feature type="binding site" evidence="1">
    <location>
        <position position="431"/>
    </location>
    <ligand>
        <name>Zn(2+)</name>
        <dbReference type="ChEBI" id="CHEBI:29105"/>
    </ligand>
</feature>
<feature type="binding site" evidence="1">
    <location>
        <position position="446"/>
    </location>
    <ligand>
        <name>Zn(2+)</name>
        <dbReference type="ChEBI" id="CHEBI:29105"/>
    </ligand>
</feature>
<feature type="binding site" evidence="1">
    <location>
        <position position="452"/>
    </location>
    <ligand>
        <name>Zn(2+)</name>
        <dbReference type="ChEBI" id="CHEBI:29105"/>
    </ligand>
</feature>
<proteinExistence type="inferred from homology"/>
<comment type="function">
    <text evidence="1">DNA ligase that catalyzes the formation of phosphodiester linkages between 5'-phosphoryl and 3'-hydroxyl groups in double-stranded DNA using NAD as a coenzyme and as the energy source for the reaction. It is essential for DNA replication and repair of damaged DNA.</text>
</comment>
<comment type="catalytic activity">
    <reaction evidence="1">
        <text>NAD(+) + (deoxyribonucleotide)n-3'-hydroxyl + 5'-phospho-(deoxyribonucleotide)m = (deoxyribonucleotide)n+m + AMP + beta-nicotinamide D-nucleotide.</text>
        <dbReference type="EC" id="6.5.1.2"/>
    </reaction>
</comment>
<comment type="cofactor">
    <cofactor evidence="1">
        <name>Mg(2+)</name>
        <dbReference type="ChEBI" id="CHEBI:18420"/>
    </cofactor>
    <cofactor evidence="1">
        <name>Mn(2+)</name>
        <dbReference type="ChEBI" id="CHEBI:29035"/>
    </cofactor>
</comment>
<comment type="similarity">
    <text evidence="1">Belongs to the NAD-dependent DNA ligase family. LigA subfamily.</text>
</comment>
<evidence type="ECO:0000255" key="1">
    <source>
        <dbReference type="HAMAP-Rule" id="MF_01588"/>
    </source>
</evidence>
<dbReference type="EC" id="6.5.1.2" evidence="1"/>
<dbReference type="EMBL" id="CP000524">
    <property type="protein sequence ID" value="ABM45313.1"/>
    <property type="molecule type" value="Genomic_DNA"/>
</dbReference>
<dbReference type="RefSeq" id="WP_005767408.1">
    <property type="nucleotide sequence ID" value="NC_008783.1"/>
</dbReference>
<dbReference type="SMR" id="A1UTB5"/>
<dbReference type="STRING" id="360095.BARBAKC583_0937"/>
<dbReference type="GeneID" id="4684723"/>
<dbReference type="KEGG" id="bbk:BARBAKC583_0937"/>
<dbReference type="PATRIC" id="fig|360095.6.peg.908"/>
<dbReference type="eggNOG" id="COG0272">
    <property type="taxonomic scope" value="Bacteria"/>
</dbReference>
<dbReference type="HOGENOM" id="CLU_007764_2_1_5"/>
<dbReference type="OrthoDB" id="9759736at2"/>
<dbReference type="Proteomes" id="UP000000643">
    <property type="component" value="Chromosome"/>
</dbReference>
<dbReference type="GO" id="GO:0005829">
    <property type="term" value="C:cytosol"/>
    <property type="evidence" value="ECO:0007669"/>
    <property type="project" value="TreeGrafter"/>
</dbReference>
<dbReference type="GO" id="GO:0003911">
    <property type="term" value="F:DNA ligase (NAD+) activity"/>
    <property type="evidence" value="ECO:0007669"/>
    <property type="project" value="UniProtKB-UniRule"/>
</dbReference>
<dbReference type="GO" id="GO:0046872">
    <property type="term" value="F:metal ion binding"/>
    <property type="evidence" value="ECO:0007669"/>
    <property type="project" value="UniProtKB-KW"/>
</dbReference>
<dbReference type="GO" id="GO:0006281">
    <property type="term" value="P:DNA repair"/>
    <property type="evidence" value="ECO:0007669"/>
    <property type="project" value="UniProtKB-KW"/>
</dbReference>
<dbReference type="GO" id="GO:0006260">
    <property type="term" value="P:DNA replication"/>
    <property type="evidence" value="ECO:0007669"/>
    <property type="project" value="UniProtKB-KW"/>
</dbReference>
<dbReference type="CDD" id="cd17748">
    <property type="entry name" value="BRCT_DNA_ligase_like"/>
    <property type="match status" value="1"/>
</dbReference>
<dbReference type="CDD" id="cd00114">
    <property type="entry name" value="LIGANc"/>
    <property type="match status" value="1"/>
</dbReference>
<dbReference type="FunFam" id="3.30.470.30:FF:000001">
    <property type="entry name" value="DNA ligase"/>
    <property type="match status" value="1"/>
</dbReference>
<dbReference type="Gene3D" id="6.20.10.30">
    <property type="match status" value="1"/>
</dbReference>
<dbReference type="Gene3D" id="1.10.150.20">
    <property type="entry name" value="5' to 3' exonuclease, C-terminal subdomain"/>
    <property type="match status" value="2"/>
</dbReference>
<dbReference type="Gene3D" id="3.40.50.10190">
    <property type="entry name" value="BRCT domain"/>
    <property type="match status" value="1"/>
</dbReference>
<dbReference type="Gene3D" id="3.30.470.30">
    <property type="entry name" value="DNA ligase/mRNA capping enzyme"/>
    <property type="match status" value="1"/>
</dbReference>
<dbReference type="Gene3D" id="1.10.287.610">
    <property type="entry name" value="Helix hairpin bin"/>
    <property type="match status" value="1"/>
</dbReference>
<dbReference type="Gene3D" id="2.40.50.140">
    <property type="entry name" value="Nucleic acid-binding proteins"/>
    <property type="match status" value="1"/>
</dbReference>
<dbReference type="HAMAP" id="MF_01588">
    <property type="entry name" value="DNA_ligase_A"/>
    <property type="match status" value="1"/>
</dbReference>
<dbReference type="InterPro" id="IPR001357">
    <property type="entry name" value="BRCT_dom"/>
</dbReference>
<dbReference type="InterPro" id="IPR036420">
    <property type="entry name" value="BRCT_dom_sf"/>
</dbReference>
<dbReference type="InterPro" id="IPR041663">
    <property type="entry name" value="DisA/LigA_HHH"/>
</dbReference>
<dbReference type="InterPro" id="IPR001679">
    <property type="entry name" value="DNA_ligase"/>
</dbReference>
<dbReference type="InterPro" id="IPR018239">
    <property type="entry name" value="DNA_ligase_AS"/>
</dbReference>
<dbReference type="InterPro" id="IPR033136">
    <property type="entry name" value="DNA_ligase_CS"/>
</dbReference>
<dbReference type="InterPro" id="IPR013839">
    <property type="entry name" value="DNAligase_adenylation"/>
</dbReference>
<dbReference type="InterPro" id="IPR013840">
    <property type="entry name" value="DNAligase_N"/>
</dbReference>
<dbReference type="InterPro" id="IPR012340">
    <property type="entry name" value="NA-bd_OB-fold"/>
</dbReference>
<dbReference type="InterPro" id="IPR004150">
    <property type="entry name" value="NAD_DNA_ligase_OB"/>
</dbReference>
<dbReference type="InterPro" id="IPR010994">
    <property type="entry name" value="RuvA_2-like"/>
</dbReference>
<dbReference type="InterPro" id="IPR004149">
    <property type="entry name" value="Znf_DNAligase_C4"/>
</dbReference>
<dbReference type="NCBIfam" id="TIGR00575">
    <property type="entry name" value="dnlj"/>
    <property type="match status" value="1"/>
</dbReference>
<dbReference type="NCBIfam" id="NF005932">
    <property type="entry name" value="PRK07956.1"/>
    <property type="match status" value="1"/>
</dbReference>
<dbReference type="PANTHER" id="PTHR23389">
    <property type="entry name" value="CHROMOSOME TRANSMISSION FIDELITY FACTOR 18"/>
    <property type="match status" value="1"/>
</dbReference>
<dbReference type="PANTHER" id="PTHR23389:SF9">
    <property type="entry name" value="DNA LIGASE"/>
    <property type="match status" value="1"/>
</dbReference>
<dbReference type="Pfam" id="PF00533">
    <property type="entry name" value="BRCT"/>
    <property type="match status" value="1"/>
</dbReference>
<dbReference type="Pfam" id="PF01653">
    <property type="entry name" value="DNA_ligase_aden"/>
    <property type="match status" value="1"/>
</dbReference>
<dbReference type="Pfam" id="PF03120">
    <property type="entry name" value="DNA_ligase_OB"/>
    <property type="match status" value="1"/>
</dbReference>
<dbReference type="Pfam" id="PF03119">
    <property type="entry name" value="DNA_ligase_ZBD"/>
    <property type="match status" value="1"/>
</dbReference>
<dbReference type="Pfam" id="PF12826">
    <property type="entry name" value="HHH_2"/>
    <property type="match status" value="1"/>
</dbReference>
<dbReference type="PIRSF" id="PIRSF001604">
    <property type="entry name" value="LigA"/>
    <property type="match status" value="1"/>
</dbReference>
<dbReference type="SMART" id="SM00292">
    <property type="entry name" value="BRCT"/>
    <property type="match status" value="1"/>
</dbReference>
<dbReference type="SMART" id="SM00532">
    <property type="entry name" value="LIGANc"/>
    <property type="match status" value="1"/>
</dbReference>
<dbReference type="SUPFAM" id="SSF52113">
    <property type="entry name" value="BRCT domain"/>
    <property type="match status" value="1"/>
</dbReference>
<dbReference type="SUPFAM" id="SSF56091">
    <property type="entry name" value="DNA ligase/mRNA capping enzyme, catalytic domain"/>
    <property type="match status" value="1"/>
</dbReference>
<dbReference type="SUPFAM" id="SSF50249">
    <property type="entry name" value="Nucleic acid-binding proteins"/>
    <property type="match status" value="1"/>
</dbReference>
<dbReference type="SUPFAM" id="SSF47781">
    <property type="entry name" value="RuvA domain 2-like"/>
    <property type="match status" value="1"/>
</dbReference>
<dbReference type="PROSITE" id="PS50172">
    <property type="entry name" value="BRCT"/>
    <property type="match status" value="1"/>
</dbReference>
<dbReference type="PROSITE" id="PS01055">
    <property type="entry name" value="DNA_LIGASE_N1"/>
    <property type="match status" value="1"/>
</dbReference>
<dbReference type="PROSITE" id="PS01056">
    <property type="entry name" value="DNA_LIGASE_N2"/>
    <property type="match status" value="1"/>
</dbReference>
<accession>A1UTB5</accession>
<keyword id="KW-0227">DNA damage</keyword>
<keyword id="KW-0234">DNA repair</keyword>
<keyword id="KW-0235">DNA replication</keyword>
<keyword id="KW-0436">Ligase</keyword>
<keyword id="KW-0460">Magnesium</keyword>
<keyword id="KW-0464">Manganese</keyword>
<keyword id="KW-0479">Metal-binding</keyword>
<keyword id="KW-0520">NAD</keyword>
<keyword id="KW-0862">Zinc</keyword>
<protein>
    <recommendedName>
        <fullName evidence="1">DNA ligase</fullName>
        <ecNumber evidence="1">6.5.1.2</ecNumber>
    </recommendedName>
    <alternativeName>
        <fullName evidence="1">Polydeoxyribonucleotide synthase [NAD(+)]</fullName>
    </alternativeName>
</protein>
<organism>
    <name type="scientific">Bartonella bacilliformis (strain ATCC 35685 / KC583 / Herrer 020/F12,63)</name>
    <dbReference type="NCBI Taxonomy" id="360095"/>
    <lineage>
        <taxon>Bacteria</taxon>
        <taxon>Pseudomonadati</taxon>
        <taxon>Pseudomonadota</taxon>
        <taxon>Alphaproteobacteria</taxon>
        <taxon>Hyphomicrobiales</taxon>
        <taxon>Bartonellaceae</taxon>
        <taxon>Bartonella</taxon>
    </lineage>
</organism>
<reference key="1">
    <citation type="submission" date="2006-12" db="EMBL/GenBank/DDBJ databases">
        <authorList>
            <person name="Hendrix L."/>
            <person name="Mohamoud Y."/>
            <person name="Radune D."/>
            <person name="Shvartsbeyn A."/>
            <person name="Daugherty S."/>
            <person name="Dodson R."/>
            <person name="Durkin A.S."/>
            <person name="Harkins D."/>
            <person name="Huot H."/>
            <person name="Kothari S.P."/>
            <person name="Madupu R."/>
            <person name="Li J."/>
            <person name="Nelson W.C."/>
            <person name="Shrivastava S."/>
            <person name="Giglio M.G."/>
            <person name="Haft D."/>
            <person name="Selengut J."/>
            <person name="Fraser-Ligget C."/>
            <person name="Seshadri R."/>
        </authorList>
    </citation>
    <scope>NUCLEOTIDE SEQUENCE [LARGE SCALE GENOMIC DNA]</scope>
    <source>
        <strain>ATCC 35685 / KC583 / Herrer 020/F12,63</strain>
    </source>
</reference>
<sequence>MDKDAKNLTALEAERELEWLAKEIARHDVLYNNHDQPEISDARYDALRRRNIEIETLFPELVRADSPSYKVGAPISERFEKSVHAQAMLSLDNAFSSEDVHEFVERVRRFLRLPVTKTLEMTAEPKIDGLSLSLRYEKGKLVCAATRGDGYVGENVTVNARTLSDIPQVLQGDFPDILEVRGEVYMRHSDFQDLNVDQQEKGKLVFANPRNAAAGSLRQLDTRMTARRKLKFFAYGWGEVSEMPAKSQMEMVKKLKEYGFVINPLTKVFKAVEDLISYYHFIEEGRQHLDYDIDGVVYKVNDLLLQTRLGNVSRSPRWAIAHKFPAEKAMALLENIDIQIGRTGALTPVARLAPITVGGVVVTNASLHNEDYIKGLGSKSESIREGRDIRIGDTVIVQRAGDVIPQIIDVIIEKRPKGASPFVFPSLCPACGSHAVREVGEAVRRCTGGLICPAQAIERIRHFVSRNAFDIEGLGEKQVEFFFHAQDETLRIHSPADIFTLQKRQEKSLTRLENMEGFGTLSVRKLYDAINARRKIPLSRFLFALGIRHVGEVNARRLARAYQNYNAFETVAMTALMPCNKEDKGNEEWLELTSIEGIGVRVGKAIIDFYQETHNRDVLSSLLQEVTPLPEEAAVADYSPVAGKTIVFTGTLVHMSRDEVKALAERLGAKASSSISKKTDLLVAGIGAGSKLTKAKELGIEIMDEESWLQLINEHHI</sequence>